<comment type="function">
    <text evidence="1">Catalyzes the interconversion between ADP-D-glycero-beta-D-manno-heptose and ADP-L-glycero-beta-D-manno-heptose via an epimerization at carbon 6 of the heptose.</text>
</comment>
<comment type="catalytic activity">
    <reaction evidence="1">
        <text>ADP-D-glycero-beta-D-manno-heptose = ADP-L-glycero-beta-D-manno-heptose</text>
        <dbReference type="Rhea" id="RHEA:17577"/>
        <dbReference type="ChEBI" id="CHEBI:59967"/>
        <dbReference type="ChEBI" id="CHEBI:61506"/>
        <dbReference type="EC" id="5.1.3.20"/>
    </reaction>
</comment>
<comment type="cofactor">
    <cofactor evidence="1">
        <name>NADP(+)</name>
        <dbReference type="ChEBI" id="CHEBI:58349"/>
    </cofactor>
    <text evidence="1">Binds 1 NADP(+) per subunit.</text>
</comment>
<comment type="pathway">
    <text evidence="1">Nucleotide-sugar biosynthesis; ADP-L-glycero-beta-D-manno-heptose biosynthesis; ADP-L-glycero-beta-D-manno-heptose from D-glycero-beta-D-manno-heptose 7-phosphate: step 4/4.</text>
</comment>
<comment type="subunit">
    <text evidence="1">Homopentamer.</text>
</comment>
<comment type="domain">
    <text evidence="1">Contains a large N-terminal NADP-binding domain, and a smaller C-terminal substrate-binding domain.</text>
</comment>
<comment type="similarity">
    <text evidence="1">Belongs to the NAD(P)-dependent epimerase/dehydratase family. HldD subfamily.</text>
</comment>
<evidence type="ECO:0000255" key="1">
    <source>
        <dbReference type="HAMAP-Rule" id="MF_01601"/>
    </source>
</evidence>
<organism>
    <name type="scientific">Nitratidesulfovibrio vulgaris (strain ATCC 29579 / DSM 644 / CCUG 34227 / NCIMB 8303 / VKM B-1760 / Hildenborough)</name>
    <name type="common">Desulfovibrio vulgaris</name>
    <dbReference type="NCBI Taxonomy" id="882"/>
    <lineage>
        <taxon>Bacteria</taxon>
        <taxon>Pseudomonadati</taxon>
        <taxon>Thermodesulfobacteriota</taxon>
        <taxon>Desulfovibrionia</taxon>
        <taxon>Desulfovibrionales</taxon>
        <taxon>Desulfovibrionaceae</taxon>
        <taxon>Nitratidesulfovibrio</taxon>
    </lineage>
</organism>
<gene>
    <name evidence="1" type="primary">hldD</name>
    <name type="synonym">rfaD</name>
    <name type="ordered locus">DVU_0481</name>
</gene>
<protein>
    <recommendedName>
        <fullName evidence="1">ADP-L-glycero-D-manno-heptose-6-epimerase</fullName>
        <ecNumber evidence="1">5.1.3.20</ecNumber>
    </recommendedName>
    <alternativeName>
        <fullName evidence="1">ADP-L-glycero-beta-D-manno-heptose-6-epimerase</fullName>
        <shortName evidence="1">ADP-glyceromanno-heptose 6-epimerase</shortName>
        <shortName evidence="1">ADP-hep 6-epimerase</shortName>
        <shortName evidence="1">AGME</shortName>
    </alternativeName>
</protein>
<proteinExistence type="inferred from homology"/>
<reference key="1">
    <citation type="journal article" date="2004" name="Nat. Biotechnol.">
        <title>The genome sequence of the anaerobic, sulfate-reducing bacterium Desulfovibrio vulgaris Hildenborough.</title>
        <authorList>
            <person name="Heidelberg J.F."/>
            <person name="Seshadri R."/>
            <person name="Haveman S.A."/>
            <person name="Hemme C.L."/>
            <person name="Paulsen I.T."/>
            <person name="Kolonay J.F."/>
            <person name="Eisen J.A."/>
            <person name="Ward N.L."/>
            <person name="Methe B.A."/>
            <person name="Brinkac L.M."/>
            <person name="Daugherty S.C."/>
            <person name="DeBoy R.T."/>
            <person name="Dodson R.J."/>
            <person name="Durkin A.S."/>
            <person name="Madupu R."/>
            <person name="Nelson W.C."/>
            <person name="Sullivan S.A."/>
            <person name="Fouts D.E."/>
            <person name="Haft D.H."/>
            <person name="Selengut J."/>
            <person name="Peterson J.D."/>
            <person name="Davidsen T.M."/>
            <person name="Zafar N."/>
            <person name="Zhou L."/>
            <person name="Radune D."/>
            <person name="Dimitrov G."/>
            <person name="Hance M."/>
            <person name="Tran K."/>
            <person name="Khouri H.M."/>
            <person name="Gill J."/>
            <person name="Utterback T.R."/>
            <person name="Feldblyum T.V."/>
            <person name="Wall J.D."/>
            <person name="Voordouw G."/>
            <person name="Fraser C.M."/>
        </authorList>
    </citation>
    <scope>NUCLEOTIDE SEQUENCE [LARGE SCALE GENOMIC DNA]</scope>
    <source>
        <strain>ATCC 29579 / DSM 644 / CCUG 34227 / NCIMB 8303 / VKM B-1760 / Hildenborough</strain>
    </source>
</reference>
<name>HLDD_NITV2</name>
<keyword id="KW-0119">Carbohydrate metabolism</keyword>
<keyword id="KW-0413">Isomerase</keyword>
<keyword id="KW-0521">NADP</keyword>
<keyword id="KW-1185">Reference proteome</keyword>
<sequence>MYIVTGGAGFIGSAMVWKLNEMGIEDIVVVDNLSTSEKWKNLVNRRYVDYVHRDTFMDMVLHGDLPWDVDAVVHMGACSATTERDADFLMENNLRYSRMLCELCMETGARFINASSAATYGDGSLGFSDDDTTMLRLKPLNMYGYSKQLFDLWAYREGRLDGIASLKFFNVYGPNEYHKGDMRSVICKAYAQIGQEGVMRLFRSCHPDYADGGQMRDFIYVKDCVEVMWWLLQNPGVNGVFNVGTGKARTWNDLVTAVFRAMDREPVIEYIDMPEQLRGKYQSFTEATMGKLRDAGCPVRFTELEDGVTEYVRRYLAAADPHL</sequence>
<dbReference type="EC" id="5.1.3.20" evidence="1"/>
<dbReference type="EMBL" id="AE017285">
    <property type="protein sequence ID" value="AAS94964.1"/>
    <property type="molecule type" value="Genomic_DNA"/>
</dbReference>
<dbReference type="RefSeq" id="WP_010937788.1">
    <property type="nucleotide sequence ID" value="NC_002937.3"/>
</dbReference>
<dbReference type="RefSeq" id="YP_009705.1">
    <property type="nucleotide sequence ID" value="NC_002937.3"/>
</dbReference>
<dbReference type="SMR" id="Q72ET7"/>
<dbReference type="STRING" id="882.DVU_0481"/>
<dbReference type="PaxDb" id="882-DVU_0481"/>
<dbReference type="EnsemblBacteria" id="AAS94964">
    <property type="protein sequence ID" value="AAS94964"/>
    <property type="gene ID" value="DVU_0481"/>
</dbReference>
<dbReference type="KEGG" id="dvu:DVU_0481"/>
<dbReference type="PATRIC" id="fig|882.5.peg.455"/>
<dbReference type="eggNOG" id="COG0451">
    <property type="taxonomic scope" value="Bacteria"/>
</dbReference>
<dbReference type="HOGENOM" id="CLU_007383_1_3_7"/>
<dbReference type="OrthoDB" id="9803010at2"/>
<dbReference type="PhylomeDB" id="Q72ET7"/>
<dbReference type="UniPathway" id="UPA00356">
    <property type="reaction ID" value="UER00440"/>
</dbReference>
<dbReference type="Proteomes" id="UP000002194">
    <property type="component" value="Chromosome"/>
</dbReference>
<dbReference type="GO" id="GO:0008712">
    <property type="term" value="F:ADP-glyceromanno-heptose 6-epimerase activity"/>
    <property type="evidence" value="ECO:0007669"/>
    <property type="project" value="UniProtKB-UniRule"/>
</dbReference>
<dbReference type="GO" id="GO:0050661">
    <property type="term" value="F:NADP binding"/>
    <property type="evidence" value="ECO:0007669"/>
    <property type="project" value="InterPro"/>
</dbReference>
<dbReference type="GO" id="GO:0097171">
    <property type="term" value="P:ADP-L-glycero-beta-D-manno-heptose biosynthetic process"/>
    <property type="evidence" value="ECO:0007669"/>
    <property type="project" value="UniProtKB-UniPathway"/>
</dbReference>
<dbReference type="GO" id="GO:0005975">
    <property type="term" value="P:carbohydrate metabolic process"/>
    <property type="evidence" value="ECO:0007669"/>
    <property type="project" value="UniProtKB-UniRule"/>
</dbReference>
<dbReference type="CDD" id="cd05248">
    <property type="entry name" value="ADP_GME_SDR_e"/>
    <property type="match status" value="1"/>
</dbReference>
<dbReference type="Gene3D" id="3.40.50.720">
    <property type="entry name" value="NAD(P)-binding Rossmann-like Domain"/>
    <property type="match status" value="1"/>
</dbReference>
<dbReference type="Gene3D" id="3.90.25.10">
    <property type="entry name" value="UDP-galactose 4-epimerase, domain 1"/>
    <property type="match status" value="1"/>
</dbReference>
<dbReference type="HAMAP" id="MF_01601">
    <property type="entry name" value="Heptose_epimerase"/>
    <property type="match status" value="1"/>
</dbReference>
<dbReference type="InterPro" id="IPR001509">
    <property type="entry name" value="Epimerase_deHydtase"/>
</dbReference>
<dbReference type="InterPro" id="IPR011912">
    <property type="entry name" value="Heptose_epim"/>
</dbReference>
<dbReference type="InterPro" id="IPR036291">
    <property type="entry name" value="NAD(P)-bd_dom_sf"/>
</dbReference>
<dbReference type="NCBIfam" id="TIGR02197">
    <property type="entry name" value="heptose_epim"/>
    <property type="match status" value="1"/>
</dbReference>
<dbReference type="PANTHER" id="PTHR43103:SF3">
    <property type="entry name" value="ADP-L-GLYCERO-D-MANNO-HEPTOSE-6-EPIMERASE"/>
    <property type="match status" value="1"/>
</dbReference>
<dbReference type="PANTHER" id="PTHR43103">
    <property type="entry name" value="NUCLEOSIDE-DIPHOSPHATE-SUGAR EPIMERASE"/>
    <property type="match status" value="1"/>
</dbReference>
<dbReference type="Pfam" id="PF01370">
    <property type="entry name" value="Epimerase"/>
    <property type="match status" value="1"/>
</dbReference>
<dbReference type="SUPFAM" id="SSF51735">
    <property type="entry name" value="NAD(P)-binding Rossmann-fold domains"/>
    <property type="match status" value="1"/>
</dbReference>
<feature type="chain" id="PRO_0000205792" description="ADP-L-glycero-D-manno-heptose-6-epimerase">
    <location>
        <begin position="1"/>
        <end position="323"/>
    </location>
</feature>
<feature type="active site" description="Proton acceptor" evidence="1">
    <location>
        <position position="143"/>
    </location>
</feature>
<feature type="active site" description="Proton acceptor" evidence="1">
    <location>
        <position position="179"/>
    </location>
</feature>
<feature type="binding site" evidence="1">
    <location>
        <begin position="10"/>
        <end position="11"/>
    </location>
    <ligand>
        <name>NADP(+)</name>
        <dbReference type="ChEBI" id="CHEBI:58349"/>
    </ligand>
</feature>
<feature type="binding site" evidence="1">
    <location>
        <begin position="31"/>
        <end position="32"/>
    </location>
    <ligand>
        <name>NADP(+)</name>
        <dbReference type="ChEBI" id="CHEBI:58349"/>
    </ligand>
</feature>
<feature type="binding site" evidence="1">
    <location>
        <position position="38"/>
    </location>
    <ligand>
        <name>NADP(+)</name>
        <dbReference type="ChEBI" id="CHEBI:58349"/>
    </ligand>
</feature>
<feature type="binding site" evidence="1">
    <location>
        <position position="53"/>
    </location>
    <ligand>
        <name>NADP(+)</name>
        <dbReference type="ChEBI" id="CHEBI:58349"/>
    </ligand>
</feature>
<feature type="binding site" evidence="1">
    <location>
        <begin position="75"/>
        <end position="79"/>
    </location>
    <ligand>
        <name>NADP(+)</name>
        <dbReference type="ChEBI" id="CHEBI:58349"/>
    </ligand>
</feature>
<feature type="binding site" evidence="1">
    <location>
        <position position="92"/>
    </location>
    <ligand>
        <name>NADP(+)</name>
        <dbReference type="ChEBI" id="CHEBI:58349"/>
    </ligand>
</feature>
<feature type="binding site" evidence="1">
    <location>
        <position position="147"/>
    </location>
    <ligand>
        <name>NADP(+)</name>
        <dbReference type="ChEBI" id="CHEBI:58349"/>
    </ligand>
</feature>
<feature type="binding site" evidence="1">
    <location>
        <position position="170"/>
    </location>
    <ligand>
        <name>substrate</name>
    </ligand>
</feature>
<feature type="binding site" evidence="1">
    <location>
        <position position="171"/>
    </location>
    <ligand>
        <name>NADP(+)</name>
        <dbReference type="ChEBI" id="CHEBI:58349"/>
    </ligand>
</feature>
<feature type="binding site" evidence="1">
    <location>
        <position position="179"/>
    </location>
    <ligand>
        <name>NADP(+)</name>
        <dbReference type="ChEBI" id="CHEBI:58349"/>
    </ligand>
</feature>
<feature type="binding site" evidence="1">
    <location>
        <position position="181"/>
    </location>
    <ligand>
        <name>substrate</name>
    </ligand>
</feature>
<feature type="binding site" evidence="1">
    <location>
        <position position="188"/>
    </location>
    <ligand>
        <name>substrate</name>
    </ligand>
</feature>
<feature type="binding site" evidence="1">
    <location>
        <begin position="202"/>
        <end position="205"/>
    </location>
    <ligand>
        <name>substrate</name>
    </ligand>
</feature>
<feature type="binding site" evidence="1">
    <location>
        <position position="216"/>
    </location>
    <ligand>
        <name>substrate</name>
    </ligand>
</feature>
<feature type="binding site" evidence="1">
    <location>
        <position position="281"/>
    </location>
    <ligand>
        <name>substrate</name>
    </ligand>
</feature>
<accession>Q72ET7</accession>